<comment type="function">
    <text evidence="2 4">Snake venom phospholipase A2 (PLA2) homolog that lacks enzymatic activity (PubMed:10863008). Shows myotoxic activity and edema-inducing activities in vivo (PubMed:10863008). A model of myotoxic mechanism has been proposed: an apo Lys49-PLA2 is activated by the entrance of a hydrophobic molecule (e.g. fatty acid) at the hydrophobic channel of the protein leading to a reorientation of a monomer (By similarity). This reorientation causes a transition between 'inactive' to 'active' states, causing alignment of C-terminal and membrane-docking sites (MDoS) side-by-side and putting the membrane-disruption sites (MDiS) in the same plane, exposed to solvent and in a symmetric position for both monomers (By similarity). The MDoS region stabilizes the toxin on membrane by the interaction of charged residues with phospholipid head groups (By similarity). Subsequently, the MDiS region destabilizes the membrane with penetration of hydrophobic residues (By similarity). This insertion causes a disorganization of the membrane, allowing an uncontrolled influx of ions (i.e. calcium and sodium), and eventually triggering irreversible intracellular alterations and cell death (By similarity).</text>
</comment>
<comment type="subunit">
    <text evidence="1">Homodimer; non-covalently linked.</text>
</comment>
<comment type="subcellular location">
    <subcellularLocation>
        <location evidence="4">Secreted</location>
    </subcellularLocation>
</comment>
<comment type="tissue specificity">
    <text evidence="9">Expressed by the venom gland.</text>
</comment>
<comment type="similarity">
    <text evidence="8">Belongs to the phospholipase A2 family. Group II subfamily. K49 sub-subfamily.</text>
</comment>
<comment type="caution">
    <text evidence="8">Does not bind calcium as one of the calcium-binding sites is lost (Asp-&gt;Lys in position 48, which corresponds to 'Lys-49' in the current nomenclature).</text>
</comment>
<sequence>SLFELGKMILQETGKNPAKSYGAYGCNCGVLGRGKPKDATDRCCYVHKCCYKKLTGCNPKKDRYSYSWKDKTIVCGENNPCLKELCECDKAVAICLRENLGTYNKKYRYHLKPFCKKADDC</sequence>
<reference key="1">
    <citation type="journal article" date="2000" name="Biochimie">
        <title>Amino acid sequence of piratoxin-II, a myotoxic Lys49 phospholipase A2 homologue from Bothrops piraja venom.</title>
        <authorList>
            <person name="Toyama M.H."/>
            <person name="Soares A.M."/>
            <person name="Lee W.-H."/>
            <person name="Polikarpov I."/>
            <person name="Giglio J.R."/>
            <person name="Marangoni S."/>
        </authorList>
    </citation>
    <scope>PROTEIN SEQUENCE</scope>
    <scope>FUNCTION</scope>
    <scope>SUBCELLULAR LOCATION</scope>
    <source>
        <tissue>Venom</tissue>
    </source>
</reference>
<reference key="2">
    <citation type="journal article" date="2013" name="J. Proteomics">
        <title>Proteomic analysis of Bothrops pirajai snake venom and characterization of BpirMP, a new P-I metalloproteinase.</title>
        <authorList>
            <person name="Bernardes C.P."/>
            <person name="Menaldo D.L."/>
            <person name="Camacho E."/>
            <person name="Rosa J.C."/>
            <person name="Escalante T."/>
            <person name="Rucavado A."/>
            <person name="Lomonte B."/>
            <person name="Gutierrez J.M."/>
            <person name="Sampaio S.V."/>
        </authorList>
    </citation>
    <scope>IDENTIFICATION BY MASS SPECTROMETRY</scope>
</reference>
<reference evidence="10" key="3">
    <citation type="journal article" date="2001" name="Biochemistry">
        <title>Structural basis for low catalytic activity in Lys49 phospholipases A2 -- a hypothesis: the crystal structure of piratoxin II complexed to fatty acid.</title>
        <authorList>
            <person name="Lee W.-H."/>
            <person name="da Silva Giotto M.T."/>
            <person name="Marangoni S."/>
            <person name="Toyama M.H."/>
            <person name="Polikarpov I."/>
            <person name="Garratt R.C."/>
        </authorList>
    </citation>
    <scope>X-RAY CRYSTALLOGRAPHY (2.04 ANGSTROMS) OF 1-119 IN COMPLEX WITH FATTY ACID</scope>
    <scope>DISULFIDE BONDS</scope>
</reference>
<reference evidence="11 12" key="4">
    <citation type="journal article" date="2009" name="J. Struct. Biol.">
        <title>Comparative structural studies on Lys49-phospholipases A(2) from Bothrops genus reveal their myotoxic site.</title>
        <authorList>
            <person name="dos Santos J.I."/>
            <person name="Soares A.M."/>
            <person name="Fontes M.R."/>
        </authorList>
    </citation>
    <scope>X-RAY CRYSTALLOGRAPHY (1.65 ANGSTROMS) ALONE AND IN COMPLEX WITH ALPHA-TOCOPHEROL (VITAMIN E)</scope>
    <scope>DISULFIDE BONDS</scope>
</reference>
<feature type="chain" id="PRO_0000161628" description="Basic phospholipase A2 homolog piratoxin-2">
    <location>
        <begin position="1"/>
        <end position="121"/>
    </location>
</feature>
<feature type="region of interest" description="Important for membrane-damaging activities in eukaryotes and bacteria; heparin-binding" evidence="3">
    <location>
        <begin position="105"/>
        <end position="117"/>
    </location>
</feature>
<feature type="disulfide bond" evidence="5 6 13 14">
    <location>
        <begin position="26"/>
        <end position="115"/>
    </location>
</feature>
<feature type="disulfide bond" evidence="5 6 13 14">
    <location>
        <begin position="28"/>
        <end position="44"/>
    </location>
</feature>
<feature type="disulfide bond" evidence="5 6 13 14">
    <location>
        <begin position="43"/>
        <end position="95"/>
    </location>
</feature>
<feature type="disulfide bond" evidence="5 6 13 14">
    <location>
        <begin position="49"/>
        <end position="121"/>
    </location>
</feature>
<feature type="disulfide bond" evidence="5 6 13 14">
    <location>
        <begin position="50"/>
        <end position="88"/>
    </location>
</feature>
<feature type="disulfide bond" evidence="5 6 13 14">
    <location>
        <begin position="57"/>
        <end position="81"/>
    </location>
</feature>
<feature type="disulfide bond" evidence="5 6 13 14">
    <location>
        <begin position="75"/>
        <end position="86"/>
    </location>
</feature>
<feature type="helix" evidence="15">
    <location>
        <begin position="2"/>
        <end position="13"/>
    </location>
</feature>
<feature type="helix" evidence="15">
    <location>
        <begin position="17"/>
        <end position="21"/>
    </location>
</feature>
<feature type="strand" evidence="15">
    <location>
        <begin position="22"/>
        <end position="24"/>
    </location>
</feature>
<feature type="turn" evidence="15">
    <location>
        <begin position="25"/>
        <end position="27"/>
    </location>
</feature>
<feature type="strand" evidence="15">
    <location>
        <begin position="28"/>
        <end position="31"/>
    </location>
</feature>
<feature type="helix" evidence="15">
    <location>
        <begin position="39"/>
        <end position="53"/>
    </location>
</feature>
<feature type="turn" evidence="15">
    <location>
        <begin position="59"/>
        <end position="61"/>
    </location>
</feature>
<feature type="strand" evidence="16">
    <location>
        <begin position="66"/>
        <end position="68"/>
    </location>
</feature>
<feature type="helix" evidence="15">
    <location>
        <begin position="69"/>
        <end position="71"/>
    </location>
</feature>
<feature type="helix" evidence="15">
    <location>
        <begin position="80"/>
        <end position="98"/>
    </location>
</feature>
<feature type="helix" evidence="15">
    <location>
        <begin position="99"/>
        <end position="102"/>
    </location>
</feature>
<feature type="helix" evidence="15">
    <location>
        <begin position="105"/>
        <end position="107"/>
    </location>
</feature>
<feature type="helix" evidence="16">
    <location>
        <begin position="112"/>
        <end position="114"/>
    </location>
</feature>
<protein>
    <recommendedName>
        <fullName>Basic phospholipase A2 homolog piratoxin-2</fullName>
        <shortName>svPLA2 homolog</shortName>
    </recommendedName>
    <alternativeName>
        <fullName evidence="7">Piratoxin-II</fullName>
        <shortName evidence="7">PrTX-II</shortName>
    </alternativeName>
</protein>
<keyword id="KW-0002">3D-structure</keyword>
<keyword id="KW-0903">Direct protein sequencing</keyword>
<keyword id="KW-1015">Disulfide bond</keyword>
<keyword id="KW-0959">Myotoxin</keyword>
<keyword id="KW-0964">Secreted</keyword>
<keyword id="KW-0800">Toxin</keyword>
<proteinExistence type="evidence at protein level"/>
<dbReference type="PDB" id="1QLL">
    <property type="method" value="X-ray"/>
    <property type="resolution" value="2.04 A"/>
    <property type="chains" value="A/B=1-119"/>
</dbReference>
<dbReference type="PDB" id="2Q2J">
    <property type="method" value="X-ray"/>
    <property type="resolution" value="1.65 A"/>
    <property type="chains" value="A/B=1-121"/>
</dbReference>
<dbReference type="PDB" id="3CYL">
    <property type="method" value="X-ray"/>
    <property type="resolution" value="1.87 A"/>
    <property type="chains" value="A/B=1-121"/>
</dbReference>
<dbReference type="PDBsum" id="1QLL"/>
<dbReference type="PDBsum" id="2Q2J"/>
<dbReference type="PDBsum" id="3CYL"/>
<dbReference type="SMR" id="P82287"/>
<dbReference type="EvolutionaryTrace" id="P82287"/>
<dbReference type="GO" id="GO:0005576">
    <property type="term" value="C:extracellular region"/>
    <property type="evidence" value="ECO:0007669"/>
    <property type="project" value="UniProtKB-SubCell"/>
</dbReference>
<dbReference type="GO" id="GO:0005509">
    <property type="term" value="F:calcium ion binding"/>
    <property type="evidence" value="ECO:0007669"/>
    <property type="project" value="InterPro"/>
</dbReference>
<dbReference type="GO" id="GO:0047498">
    <property type="term" value="F:calcium-dependent phospholipase A2 activity"/>
    <property type="evidence" value="ECO:0007669"/>
    <property type="project" value="TreeGrafter"/>
</dbReference>
<dbReference type="GO" id="GO:0005543">
    <property type="term" value="F:phospholipid binding"/>
    <property type="evidence" value="ECO:0007669"/>
    <property type="project" value="TreeGrafter"/>
</dbReference>
<dbReference type="GO" id="GO:0090729">
    <property type="term" value="F:toxin activity"/>
    <property type="evidence" value="ECO:0007669"/>
    <property type="project" value="UniProtKB-KW"/>
</dbReference>
<dbReference type="GO" id="GO:0050482">
    <property type="term" value="P:arachidonate secretion"/>
    <property type="evidence" value="ECO:0007669"/>
    <property type="project" value="InterPro"/>
</dbReference>
<dbReference type="GO" id="GO:0016042">
    <property type="term" value="P:lipid catabolic process"/>
    <property type="evidence" value="ECO:0007669"/>
    <property type="project" value="InterPro"/>
</dbReference>
<dbReference type="GO" id="GO:0042130">
    <property type="term" value="P:negative regulation of T cell proliferation"/>
    <property type="evidence" value="ECO:0007669"/>
    <property type="project" value="TreeGrafter"/>
</dbReference>
<dbReference type="GO" id="GO:0006644">
    <property type="term" value="P:phospholipid metabolic process"/>
    <property type="evidence" value="ECO:0007669"/>
    <property type="project" value="InterPro"/>
</dbReference>
<dbReference type="CDD" id="cd00125">
    <property type="entry name" value="PLA2c"/>
    <property type="match status" value="1"/>
</dbReference>
<dbReference type="FunFam" id="1.20.90.10:FF:000001">
    <property type="entry name" value="Basic phospholipase A2 homolog"/>
    <property type="match status" value="1"/>
</dbReference>
<dbReference type="Gene3D" id="1.20.90.10">
    <property type="entry name" value="Phospholipase A2 domain"/>
    <property type="match status" value="1"/>
</dbReference>
<dbReference type="InterPro" id="IPR001211">
    <property type="entry name" value="PLipase_A2"/>
</dbReference>
<dbReference type="InterPro" id="IPR033112">
    <property type="entry name" value="PLipase_A2_Asp_AS"/>
</dbReference>
<dbReference type="InterPro" id="IPR016090">
    <property type="entry name" value="PLipase_A2_dom"/>
</dbReference>
<dbReference type="InterPro" id="IPR036444">
    <property type="entry name" value="PLipase_A2_dom_sf"/>
</dbReference>
<dbReference type="InterPro" id="IPR033113">
    <property type="entry name" value="PLipase_A2_His_AS"/>
</dbReference>
<dbReference type="PANTHER" id="PTHR11716">
    <property type="entry name" value="PHOSPHOLIPASE A2 FAMILY MEMBER"/>
    <property type="match status" value="1"/>
</dbReference>
<dbReference type="PANTHER" id="PTHR11716:SF9">
    <property type="entry name" value="PHOSPHOLIPASE A2, MEMBRANE ASSOCIATED"/>
    <property type="match status" value="1"/>
</dbReference>
<dbReference type="Pfam" id="PF00068">
    <property type="entry name" value="Phospholip_A2_1"/>
    <property type="match status" value="1"/>
</dbReference>
<dbReference type="PRINTS" id="PR00389">
    <property type="entry name" value="PHPHLIPASEA2"/>
</dbReference>
<dbReference type="SMART" id="SM00085">
    <property type="entry name" value="PA2c"/>
    <property type="match status" value="1"/>
</dbReference>
<dbReference type="SUPFAM" id="SSF48619">
    <property type="entry name" value="Phospholipase A2, PLA2"/>
    <property type="match status" value="1"/>
</dbReference>
<dbReference type="PROSITE" id="PS00119">
    <property type="entry name" value="PA2_ASP"/>
    <property type="match status" value="1"/>
</dbReference>
<dbReference type="PROSITE" id="PS00118">
    <property type="entry name" value="PA2_HIS"/>
    <property type="match status" value="1"/>
</dbReference>
<evidence type="ECO:0000250" key="1"/>
<evidence type="ECO:0000250" key="2">
    <source>
        <dbReference type="UniProtKB" id="I6L8L6"/>
    </source>
</evidence>
<evidence type="ECO:0000250" key="3">
    <source>
        <dbReference type="UniProtKB" id="P24605"/>
    </source>
</evidence>
<evidence type="ECO:0000269" key="4">
    <source>
    </source>
</evidence>
<evidence type="ECO:0000269" key="5">
    <source>
    </source>
</evidence>
<evidence type="ECO:0000269" key="6">
    <source>
    </source>
</evidence>
<evidence type="ECO:0000303" key="7">
    <source>
    </source>
</evidence>
<evidence type="ECO:0000305" key="8"/>
<evidence type="ECO:0000305" key="9">
    <source>
    </source>
</evidence>
<evidence type="ECO:0000312" key="10">
    <source>
        <dbReference type="PDB" id="1QLL"/>
    </source>
</evidence>
<evidence type="ECO:0000312" key="11">
    <source>
        <dbReference type="PDB" id="2Q2J"/>
    </source>
</evidence>
<evidence type="ECO:0000312" key="12">
    <source>
        <dbReference type="PDB" id="3CYL"/>
    </source>
</evidence>
<evidence type="ECO:0007744" key="13">
    <source>
        <dbReference type="PDB" id="1QLL"/>
    </source>
</evidence>
<evidence type="ECO:0007744" key="14">
    <source>
        <dbReference type="PDB" id="2Q2J"/>
    </source>
</evidence>
<evidence type="ECO:0007829" key="15">
    <source>
        <dbReference type="PDB" id="2Q2J"/>
    </source>
</evidence>
<evidence type="ECO:0007829" key="16">
    <source>
        <dbReference type="PDB" id="3CYL"/>
    </source>
</evidence>
<name>PA2H2_BOTPI</name>
<organism>
    <name type="scientific">Bothrops pirajai</name>
    <name type="common">Piraja's lancehead</name>
    <dbReference type="NCBI Taxonomy" id="113192"/>
    <lineage>
        <taxon>Eukaryota</taxon>
        <taxon>Metazoa</taxon>
        <taxon>Chordata</taxon>
        <taxon>Craniata</taxon>
        <taxon>Vertebrata</taxon>
        <taxon>Euteleostomi</taxon>
        <taxon>Lepidosauria</taxon>
        <taxon>Squamata</taxon>
        <taxon>Bifurcata</taxon>
        <taxon>Unidentata</taxon>
        <taxon>Episquamata</taxon>
        <taxon>Toxicofera</taxon>
        <taxon>Serpentes</taxon>
        <taxon>Colubroidea</taxon>
        <taxon>Viperidae</taxon>
        <taxon>Crotalinae</taxon>
        <taxon>Bothrops</taxon>
    </lineage>
</organism>
<accession>P82287</accession>